<reference key="1">
    <citation type="journal article" date="2006" name="J. Bacteriol.">
        <title>Complete genome sequence of Yersinia pestis strains Antiqua and Nepal516: evidence of gene reduction in an emerging pathogen.</title>
        <authorList>
            <person name="Chain P.S.G."/>
            <person name="Hu P."/>
            <person name="Malfatti S.A."/>
            <person name="Radnedge L."/>
            <person name="Larimer F."/>
            <person name="Vergez L.M."/>
            <person name="Worsham P."/>
            <person name="Chu M.C."/>
            <person name="Andersen G.L."/>
        </authorList>
    </citation>
    <scope>NUCLEOTIDE SEQUENCE [LARGE SCALE GENOMIC DNA]</scope>
    <source>
        <strain>Nepal516</strain>
    </source>
</reference>
<reference key="2">
    <citation type="submission" date="2009-04" db="EMBL/GenBank/DDBJ databases">
        <title>Yersinia pestis Nepal516A whole genome shotgun sequencing project.</title>
        <authorList>
            <person name="Plunkett G. III"/>
            <person name="Anderson B.D."/>
            <person name="Baumler D.J."/>
            <person name="Burland V."/>
            <person name="Cabot E.L."/>
            <person name="Glasner J.D."/>
            <person name="Mau B."/>
            <person name="Neeno-Eckwall E."/>
            <person name="Perna N.T."/>
            <person name="Munk A.C."/>
            <person name="Tapia R."/>
            <person name="Green L.D."/>
            <person name="Rogers Y.C."/>
            <person name="Detter J.C."/>
            <person name="Bruce D.C."/>
            <person name="Brettin T.S."/>
        </authorList>
    </citation>
    <scope>NUCLEOTIDE SEQUENCE [LARGE SCALE GENOMIC DNA]</scope>
    <source>
        <strain>Nepal516</strain>
    </source>
</reference>
<protein>
    <recommendedName>
        <fullName evidence="1">Outer-membrane lipoprotein LolB</fullName>
    </recommendedName>
</protein>
<organism>
    <name type="scientific">Yersinia pestis bv. Antiqua (strain Nepal516)</name>
    <dbReference type="NCBI Taxonomy" id="377628"/>
    <lineage>
        <taxon>Bacteria</taxon>
        <taxon>Pseudomonadati</taxon>
        <taxon>Pseudomonadota</taxon>
        <taxon>Gammaproteobacteria</taxon>
        <taxon>Enterobacterales</taxon>
        <taxon>Yersiniaceae</taxon>
        <taxon>Yersinia</taxon>
    </lineage>
</organism>
<gene>
    <name evidence="1" type="primary">lolB</name>
    <name type="ordered locus">YPN_1497</name>
    <name type="ORF">YP516_1657</name>
</gene>
<proteinExistence type="inferred from homology"/>
<accession>Q1CJK3</accession>
<accession>C4GSB9</accession>
<evidence type="ECO:0000255" key="1">
    <source>
        <dbReference type="HAMAP-Rule" id="MF_00233"/>
    </source>
</evidence>
<name>LOLB_YERPN</name>
<sequence length="207" mass="23981">MPMRKRHFYRLLPLASLLLAACTIPVSKGPATSPTSPQWRQHEQQLQQLGQFETRGAFAYLSDKQKVYARFFWQQTSPERYRLLLTNPLGSTELELVVQPGVTQLTDNQGKRYVSDDPQEMIQKLTGMSIPLESLRQWILGLPGDTSDFTLDDKYRLKKLTYQQNGVTWVVDYQEYNTQVTPSLPSRLELNQDGQRIKLKMDSWTIK</sequence>
<keyword id="KW-0998">Cell outer membrane</keyword>
<keyword id="KW-0143">Chaperone</keyword>
<keyword id="KW-0449">Lipoprotein</keyword>
<keyword id="KW-0472">Membrane</keyword>
<keyword id="KW-0564">Palmitate</keyword>
<keyword id="KW-0653">Protein transport</keyword>
<keyword id="KW-0732">Signal</keyword>
<keyword id="KW-0813">Transport</keyword>
<comment type="function">
    <text evidence="1">Plays a critical role in the incorporation of lipoproteins in the outer membrane after they are released by the LolA protein.</text>
</comment>
<comment type="subunit">
    <text evidence="1">Monomer.</text>
</comment>
<comment type="subcellular location">
    <subcellularLocation>
        <location evidence="1">Cell outer membrane</location>
        <topology evidence="1">Lipid-anchor</topology>
    </subcellularLocation>
</comment>
<comment type="similarity">
    <text evidence="1">Belongs to the LolB family.</text>
</comment>
<feature type="signal peptide" evidence="1">
    <location>
        <begin position="1"/>
        <end position="21"/>
    </location>
</feature>
<feature type="chain" id="PRO_1000021696" description="Outer-membrane lipoprotein LolB">
    <location>
        <begin position="22"/>
        <end position="207"/>
    </location>
</feature>
<feature type="lipid moiety-binding region" description="N-palmitoyl cysteine" evidence="1">
    <location>
        <position position="22"/>
    </location>
</feature>
<feature type="lipid moiety-binding region" description="S-diacylglycerol cysteine" evidence="1">
    <location>
        <position position="22"/>
    </location>
</feature>
<dbReference type="EMBL" id="CP000305">
    <property type="protein sequence ID" value="ABG17827.1"/>
    <property type="molecule type" value="Genomic_DNA"/>
</dbReference>
<dbReference type="EMBL" id="ACNQ01000009">
    <property type="protein sequence ID" value="EEO76929.1"/>
    <property type="molecule type" value="Genomic_DNA"/>
</dbReference>
<dbReference type="RefSeq" id="WP_002224468.1">
    <property type="nucleotide sequence ID" value="NZ_ACNQ01000009.1"/>
</dbReference>
<dbReference type="SMR" id="Q1CJK3"/>
<dbReference type="GeneID" id="57976646"/>
<dbReference type="KEGG" id="ypn:YPN_1497"/>
<dbReference type="HOGENOM" id="CLU_092816_1_1_6"/>
<dbReference type="Proteomes" id="UP000008936">
    <property type="component" value="Chromosome"/>
</dbReference>
<dbReference type="GO" id="GO:0009279">
    <property type="term" value="C:cell outer membrane"/>
    <property type="evidence" value="ECO:0007669"/>
    <property type="project" value="UniProtKB-SubCell"/>
</dbReference>
<dbReference type="GO" id="GO:0044874">
    <property type="term" value="P:lipoprotein localization to outer membrane"/>
    <property type="evidence" value="ECO:0007669"/>
    <property type="project" value="UniProtKB-UniRule"/>
</dbReference>
<dbReference type="GO" id="GO:0015031">
    <property type="term" value="P:protein transport"/>
    <property type="evidence" value="ECO:0007669"/>
    <property type="project" value="UniProtKB-KW"/>
</dbReference>
<dbReference type="CDD" id="cd16326">
    <property type="entry name" value="LolB"/>
    <property type="match status" value="1"/>
</dbReference>
<dbReference type="Gene3D" id="2.50.20.10">
    <property type="entry name" value="Lipoprotein localisation LolA/LolB/LppX"/>
    <property type="match status" value="1"/>
</dbReference>
<dbReference type="HAMAP" id="MF_00233">
    <property type="entry name" value="LolB"/>
    <property type="match status" value="1"/>
</dbReference>
<dbReference type="InterPro" id="IPR029046">
    <property type="entry name" value="LolA/LolB/LppX"/>
</dbReference>
<dbReference type="InterPro" id="IPR004565">
    <property type="entry name" value="OM_lipoprot_LolB"/>
</dbReference>
<dbReference type="NCBIfam" id="TIGR00548">
    <property type="entry name" value="lolB"/>
    <property type="match status" value="1"/>
</dbReference>
<dbReference type="Pfam" id="PF03550">
    <property type="entry name" value="LolB"/>
    <property type="match status" value="1"/>
</dbReference>
<dbReference type="SUPFAM" id="SSF89392">
    <property type="entry name" value="Prokaryotic lipoproteins and lipoprotein localization factors"/>
    <property type="match status" value="1"/>
</dbReference>
<dbReference type="PROSITE" id="PS51257">
    <property type="entry name" value="PROKAR_LIPOPROTEIN"/>
    <property type="match status" value="1"/>
</dbReference>